<feature type="chain" id="PRO_1000021891" description="Homoserine O-acetyltransferase">
    <location>
        <begin position="1"/>
        <end position="399"/>
    </location>
</feature>
<feature type="domain" description="AB hydrolase-1" evidence="1">
    <location>
        <begin position="63"/>
        <end position="372"/>
    </location>
</feature>
<feature type="active site" description="Nucleophile" evidence="1">
    <location>
        <position position="168"/>
    </location>
</feature>
<feature type="active site" evidence="1">
    <location>
        <position position="334"/>
    </location>
</feature>
<feature type="active site" evidence="1">
    <location>
        <position position="367"/>
    </location>
</feature>
<feature type="binding site" evidence="1">
    <location>
        <position position="238"/>
    </location>
    <ligand>
        <name>substrate</name>
    </ligand>
</feature>
<feature type="binding site" evidence="1">
    <location>
        <position position="368"/>
    </location>
    <ligand>
        <name>substrate</name>
    </ligand>
</feature>
<accession>Q1QQD3</accession>
<name>METXA_NITHX</name>
<protein>
    <recommendedName>
        <fullName evidence="1">Homoserine O-acetyltransferase</fullName>
        <shortName evidence="1">HAT</shortName>
        <ecNumber evidence="1">2.3.1.31</ecNumber>
    </recommendedName>
    <alternativeName>
        <fullName evidence="1">Homoserine transacetylase</fullName>
        <shortName evidence="1">HTA</shortName>
    </alternativeName>
</protein>
<proteinExistence type="inferred from homology"/>
<dbReference type="EC" id="2.3.1.31" evidence="1"/>
<dbReference type="EMBL" id="CP000319">
    <property type="protein sequence ID" value="ABE61564.1"/>
    <property type="molecule type" value="Genomic_DNA"/>
</dbReference>
<dbReference type="RefSeq" id="WP_011509268.1">
    <property type="nucleotide sequence ID" value="NC_007964.1"/>
</dbReference>
<dbReference type="SMR" id="Q1QQD3"/>
<dbReference type="STRING" id="323097.Nham_0676"/>
<dbReference type="ESTHER" id="nithx-q1qqd3">
    <property type="family name" value="Homoserine_transacetylase"/>
</dbReference>
<dbReference type="KEGG" id="nha:Nham_0676"/>
<dbReference type="eggNOG" id="COG2021">
    <property type="taxonomic scope" value="Bacteria"/>
</dbReference>
<dbReference type="HOGENOM" id="CLU_028760_1_2_5"/>
<dbReference type="OrthoDB" id="9800754at2"/>
<dbReference type="UniPathway" id="UPA00051">
    <property type="reaction ID" value="UER00074"/>
</dbReference>
<dbReference type="Proteomes" id="UP000001953">
    <property type="component" value="Chromosome"/>
</dbReference>
<dbReference type="GO" id="GO:0005737">
    <property type="term" value="C:cytoplasm"/>
    <property type="evidence" value="ECO:0007669"/>
    <property type="project" value="UniProtKB-SubCell"/>
</dbReference>
<dbReference type="GO" id="GO:0004414">
    <property type="term" value="F:homoserine O-acetyltransferase activity"/>
    <property type="evidence" value="ECO:0007669"/>
    <property type="project" value="UniProtKB-UniRule"/>
</dbReference>
<dbReference type="GO" id="GO:0009092">
    <property type="term" value="P:homoserine metabolic process"/>
    <property type="evidence" value="ECO:0007669"/>
    <property type="project" value="TreeGrafter"/>
</dbReference>
<dbReference type="GO" id="GO:0009086">
    <property type="term" value="P:methionine biosynthetic process"/>
    <property type="evidence" value="ECO:0007669"/>
    <property type="project" value="UniProtKB-UniRule"/>
</dbReference>
<dbReference type="FunFam" id="1.10.1740.110:FF:000001">
    <property type="entry name" value="Homoserine O-acetyltransferase"/>
    <property type="match status" value="1"/>
</dbReference>
<dbReference type="Gene3D" id="1.10.1740.110">
    <property type="match status" value="1"/>
</dbReference>
<dbReference type="Gene3D" id="3.40.50.1820">
    <property type="entry name" value="alpha/beta hydrolase"/>
    <property type="match status" value="1"/>
</dbReference>
<dbReference type="HAMAP" id="MF_00296">
    <property type="entry name" value="MetX_acyltransf"/>
    <property type="match status" value="1"/>
</dbReference>
<dbReference type="InterPro" id="IPR000073">
    <property type="entry name" value="AB_hydrolase_1"/>
</dbReference>
<dbReference type="InterPro" id="IPR029058">
    <property type="entry name" value="AB_hydrolase_fold"/>
</dbReference>
<dbReference type="InterPro" id="IPR008220">
    <property type="entry name" value="HAT_MetX-like"/>
</dbReference>
<dbReference type="NCBIfam" id="TIGR01392">
    <property type="entry name" value="homoserO_Ac_trn"/>
    <property type="match status" value="1"/>
</dbReference>
<dbReference type="NCBIfam" id="NF001209">
    <property type="entry name" value="PRK00175.1"/>
    <property type="match status" value="1"/>
</dbReference>
<dbReference type="PANTHER" id="PTHR32268">
    <property type="entry name" value="HOMOSERINE O-ACETYLTRANSFERASE"/>
    <property type="match status" value="1"/>
</dbReference>
<dbReference type="PANTHER" id="PTHR32268:SF11">
    <property type="entry name" value="HOMOSERINE O-ACETYLTRANSFERASE"/>
    <property type="match status" value="1"/>
</dbReference>
<dbReference type="Pfam" id="PF00561">
    <property type="entry name" value="Abhydrolase_1"/>
    <property type="match status" value="1"/>
</dbReference>
<dbReference type="PIRSF" id="PIRSF000443">
    <property type="entry name" value="Homoser_Ac_trans"/>
    <property type="match status" value="1"/>
</dbReference>
<dbReference type="SUPFAM" id="SSF53474">
    <property type="entry name" value="alpha/beta-Hydrolases"/>
    <property type="match status" value="1"/>
</dbReference>
<sequence>MVNAQSVPTPAHAEYRAQEADHPTSQVAMFAGDQPLPLDCGIDLAPFQIAYQTYGELNAGKSNAILVCHALTGDQHVANVHPVTGKPGWWVTLVGPGKPLDTDKYFVICSNVIGGCMGSTGPASTNPATGTVWGLDFPVITIPDMVRAQAMLIDRLGIDTLFSVVGGSMGGMQVLQWCVAYPQRVFSALPIACSTRHSAQNIAFHELGRQAVMADPDWRDGRYVEQGTYPHRGLGVARMAAHITYLSDAALHRKFGRRMQDRDLPTFSFDADFQVESYLRHQGSSFVERFDANSYLYLTRAMDYFDIAADHNGVLAAAFRDTRTRFCVVSFTSDWLFPTSESRATVHALNAGGARVSFAEIETDRGHDAFLLDLPEFFDIAHAFLVSAGKTRGLAAAGE</sequence>
<evidence type="ECO:0000255" key="1">
    <source>
        <dbReference type="HAMAP-Rule" id="MF_00296"/>
    </source>
</evidence>
<gene>
    <name evidence="1" type="primary">metXA</name>
    <name type="ordered locus">Nham_0676</name>
</gene>
<keyword id="KW-0012">Acyltransferase</keyword>
<keyword id="KW-0028">Amino-acid biosynthesis</keyword>
<keyword id="KW-0963">Cytoplasm</keyword>
<keyword id="KW-0486">Methionine biosynthesis</keyword>
<keyword id="KW-1185">Reference proteome</keyword>
<keyword id="KW-0808">Transferase</keyword>
<organism>
    <name type="scientific">Nitrobacter hamburgensis (strain DSM 10229 / NCIMB 13809 / X14)</name>
    <dbReference type="NCBI Taxonomy" id="323097"/>
    <lineage>
        <taxon>Bacteria</taxon>
        <taxon>Pseudomonadati</taxon>
        <taxon>Pseudomonadota</taxon>
        <taxon>Alphaproteobacteria</taxon>
        <taxon>Hyphomicrobiales</taxon>
        <taxon>Nitrobacteraceae</taxon>
        <taxon>Nitrobacter</taxon>
    </lineage>
</organism>
<reference key="1">
    <citation type="submission" date="2006-03" db="EMBL/GenBank/DDBJ databases">
        <title>Complete sequence of chromosome of Nitrobacter hamburgensis X14.</title>
        <authorList>
            <consortium name="US DOE Joint Genome Institute"/>
            <person name="Copeland A."/>
            <person name="Lucas S."/>
            <person name="Lapidus A."/>
            <person name="Barry K."/>
            <person name="Detter J.C."/>
            <person name="Glavina del Rio T."/>
            <person name="Hammon N."/>
            <person name="Israni S."/>
            <person name="Dalin E."/>
            <person name="Tice H."/>
            <person name="Pitluck S."/>
            <person name="Chain P."/>
            <person name="Malfatti S."/>
            <person name="Shin M."/>
            <person name="Vergez L."/>
            <person name="Schmutz J."/>
            <person name="Larimer F."/>
            <person name="Land M."/>
            <person name="Hauser L."/>
            <person name="Kyrpides N."/>
            <person name="Ivanova N."/>
            <person name="Ward B."/>
            <person name="Arp D."/>
            <person name="Klotz M."/>
            <person name="Stein L."/>
            <person name="O'Mullan G."/>
            <person name="Starkenburg S."/>
            <person name="Sayavedra L."/>
            <person name="Poret-Peterson A.T."/>
            <person name="Gentry M.E."/>
            <person name="Bruce D."/>
            <person name="Richardson P."/>
        </authorList>
    </citation>
    <scope>NUCLEOTIDE SEQUENCE [LARGE SCALE GENOMIC DNA]</scope>
    <source>
        <strain>DSM 10229 / NCIMB 13809 / X14</strain>
    </source>
</reference>
<comment type="function">
    <text evidence="1">Transfers an acetyl group from acetyl-CoA to L-homoserine, forming acetyl-L-homoserine.</text>
</comment>
<comment type="catalytic activity">
    <reaction evidence="1">
        <text>L-homoserine + acetyl-CoA = O-acetyl-L-homoserine + CoA</text>
        <dbReference type="Rhea" id="RHEA:13701"/>
        <dbReference type="ChEBI" id="CHEBI:57287"/>
        <dbReference type="ChEBI" id="CHEBI:57288"/>
        <dbReference type="ChEBI" id="CHEBI:57476"/>
        <dbReference type="ChEBI" id="CHEBI:57716"/>
        <dbReference type="EC" id="2.3.1.31"/>
    </reaction>
</comment>
<comment type="pathway">
    <text evidence="1">Amino-acid biosynthesis; L-methionine biosynthesis via de novo pathway; O-acetyl-L-homoserine from L-homoserine: step 1/1.</text>
</comment>
<comment type="subunit">
    <text evidence="1">Homodimer.</text>
</comment>
<comment type="subcellular location">
    <subcellularLocation>
        <location evidence="1">Cytoplasm</location>
    </subcellularLocation>
</comment>
<comment type="similarity">
    <text evidence="1">Belongs to the AB hydrolase superfamily. MetX family.</text>
</comment>